<reference key="1">
    <citation type="journal article" date="1994" name="Virology">
        <title>The complete DNA sequence of Autographa californica nuclear polyhedrosis virus.</title>
        <authorList>
            <person name="Ayres M.D."/>
            <person name="Howard S.C."/>
            <person name="Kuzio J."/>
            <person name="Lopez-Ferber M."/>
            <person name="Possee R.D."/>
        </authorList>
    </citation>
    <scope>NUCLEOTIDE SEQUENCE [LARGE SCALE GENOMIC DNA]</scope>
    <source>
        <strain>C6</strain>
    </source>
</reference>
<feature type="chain" id="PRO_0000132995" description="Uncharacterized 6.8 kDa protein in LEF8-FP intergenic region">
    <location>
        <begin position="1"/>
        <end position="57"/>
    </location>
</feature>
<feature type="region of interest" description="Disordered" evidence="1">
    <location>
        <begin position="26"/>
        <end position="57"/>
    </location>
</feature>
<feature type="compositionally biased region" description="Acidic residues" evidence="1">
    <location>
        <begin position="46"/>
        <end position="57"/>
    </location>
</feature>
<evidence type="ECO:0000256" key="1">
    <source>
        <dbReference type="SAM" id="MobiDB-lite"/>
    </source>
</evidence>
<organism>
    <name type="scientific">Autographa californica nuclear polyhedrosis virus</name>
    <name type="common">AcMNPV</name>
    <dbReference type="NCBI Taxonomy" id="46015"/>
    <lineage>
        <taxon>Viruses</taxon>
        <taxon>Viruses incertae sedis</taxon>
        <taxon>Naldaviricetes</taxon>
        <taxon>Lefavirales</taxon>
        <taxon>Baculoviridae</taxon>
        <taxon>Alphabaculovirus</taxon>
        <taxon>Alphabaculovirus aucalifornicae</taxon>
    </lineage>
</organism>
<sequence length="57" mass="6816">MFSSRKRRVAKRAFNAKSKKFPIGEVVSTRKRLKQNTNTPPHYDTSEDEDEDNYYNY</sequence>
<proteinExistence type="predicted"/>
<organismHost>
    <name type="scientific">Lepidoptera</name>
    <name type="common">butterflies and moths</name>
    <dbReference type="NCBI Taxonomy" id="7088"/>
</organismHost>
<accession>P41462</accession>
<keyword id="KW-1185">Reference proteome</keyword>
<name>Y058_NPVAC</name>
<protein>
    <recommendedName>
        <fullName>Uncharacterized 6.8 kDa protein in LEF8-FP intergenic region</fullName>
    </recommendedName>
</protein>
<dbReference type="EMBL" id="L22858">
    <property type="protein sequence ID" value="AAA66688.1"/>
    <property type="molecule type" value="Genomic_DNA"/>
</dbReference>
<dbReference type="PIR" id="C72857">
    <property type="entry name" value="C72857"/>
</dbReference>
<dbReference type="RefSeq" id="NP_054088.1">
    <property type="nucleotide sequence ID" value="NC_001623.1"/>
</dbReference>
<dbReference type="GeneID" id="1403891"/>
<dbReference type="KEGG" id="vg:1403891"/>
<dbReference type="Proteomes" id="UP000008292">
    <property type="component" value="Segment"/>
</dbReference>